<organism>
    <name type="scientific">Rhodopseudomonas palustris (strain BisB5)</name>
    <dbReference type="NCBI Taxonomy" id="316057"/>
    <lineage>
        <taxon>Bacteria</taxon>
        <taxon>Pseudomonadati</taxon>
        <taxon>Pseudomonadota</taxon>
        <taxon>Alphaproteobacteria</taxon>
        <taxon>Hyphomicrobiales</taxon>
        <taxon>Nitrobacteraceae</taxon>
        <taxon>Rhodopseudomonas</taxon>
    </lineage>
</organism>
<protein>
    <recommendedName>
        <fullName evidence="1">DNA mismatch repair protein MutL</fullName>
    </recommendedName>
</protein>
<sequence length="597" mass="64143">MPVRQLPETIVNRIAAGEVVERPASVVKELVENAIDAGACRVDVFSDGGGRRKIVIADDGGGMTQADLALAVDRHATSKLDDEDLLAIRTLGFRGEALPSIGAVARLSLTTRHAAEPHAWTLSVEGGAKSPISPAALSQGTRVEVADLFFATPARLKFLKTDRTEAEAIREVVRRLAMARPDIAFTLAGEERAPVTWAAALPGAPGRLTRLGDILGADFRANAIEVGSEREGVAVEGFAASPSLTRANALGQYLFVNGRPVRDKLILGAVRAAYADYLPRDRHPVVALFVTLDSREVDANVHPAKTEVRFRNAGLVRALIVHALKEGLAREGRRTAANSAGAAISNFRPASMPPGNWDWRSSPSYPVGGGSSAAPSFGERPQAAFDVGGPSADIRPHEAAPELLDRPLGAARTQIHETYIVSQTRDGLIVVDQHAAHERIVYERLKASLDANGVQRQILLIPDIVEMDEATVERLVARAEELSKFGLVVESFGPGAVAVRETPSLLGKVNAASLLRDLAEHMAEWDEALPLERRLMHVAATMACHGSVRAGRVLKPEEMNALLREMEATPNSGQCNHGRPTYVELTLADIEKLFGRR</sequence>
<gene>
    <name evidence="1" type="primary">mutL</name>
    <name type="ordered locus">RPD_4032</name>
</gene>
<dbReference type="EMBL" id="CP000283">
    <property type="protein sequence ID" value="ABE41251.1"/>
    <property type="molecule type" value="Genomic_DNA"/>
</dbReference>
<dbReference type="SMR" id="Q131I8"/>
<dbReference type="STRING" id="316057.RPD_4032"/>
<dbReference type="KEGG" id="rpd:RPD_4032"/>
<dbReference type="eggNOG" id="COG0323">
    <property type="taxonomic scope" value="Bacteria"/>
</dbReference>
<dbReference type="HOGENOM" id="CLU_004131_4_2_5"/>
<dbReference type="BioCyc" id="RPAL316057:RPD_RS20275-MONOMER"/>
<dbReference type="Proteomes" id="UP000001818">
    <property type="component" value="Chromosome"/>
</dbReference>
<dbReference type="GO" id="GO:0032300">
    <property type="term" value="C:mismatch repair complex"/>
    <property type="evidence" value="ECO:0007669"/>
    <property type="project" value="InterPro"/>
</dbReference>
<dbReference type="GO" id="GO:0005524">
    <property type="term" value="F:ATP binding"/>
    <property type="evidence" value="ECO:0007669"/>
    <property type="project" value="InterPro"/>
</dbReference>
<dbReference type="GO" id="GO:0016887">
    <property type="term" value="F:ATP hydrolysis activity"/>
    <property type="evidence" value="ECO:0007669"/>
    <property type="project" value="InterPro"/>
</dbReference>
<dbReference type="GO" id="GO:0140664">
    <property type="term" value="F:ATP-dependent DNA damage sensor activity"/>
    <property type="evidence" value="ECO:0007669"/>
    <property type="project" value="InterPro"/>
</dbReference>
<dbReference type="GO" id="GO:0030983">
    <property type="term" value="F:mismatched DNA binding"/>
    <property type="evidence" value="ECO:0007669"/>
    <property type="project" value="InterPro"/>
</dbReference>
<dbReference type="GO" id="GO:0006298">
    <property type="term" value="P:mismatch repair"/>
    <property type="evidence" value="ECO:0007669"/>
    <property type="project" value="UniProtKB-UniRule"/>
</dbReference>
<dbReference type="CDD" id="cd16926">
    <property type="entry name" value="HATPase_MutL-MLH-PMS-like"/>
    <property type="match status" value="1"/>
</dbReference>
<dbReference type="CDD" id="cd00782">
    <property type="entry name" value="MutL_Trans"/>
    <property type="match status" value="1"/>
</dbReference>
<dbReference type="FunFam" id="3.30.565.10:FF:000003">
    <property type="entry name" value="DNA mismatch repair endonuclease MutL"/>
    <property type="match status" value="1"/>
</dbReference>
<dbReference type="Gene3D" id="3.30.230.10">
    <property type="match status" value="1"/>
</dbReference>
<dbReference type="Gene3D" id="3.30.565.10">
    <property type="entry name" value="Histidine kinase-like ATPase, C-terminal domain"/>
    <property type="match status" value="1"/>
</dbReference>
<dbReference type="Gene3D" id="3.30.1540.20">
    <property type="entry name" value="MutL, C-terminal domain, dimerisation subdomain"/>
    <property type="match status" value="1"/>
</dbReference>
<dbReference type="Gene3D" id="3.30.1370.100">
    <property type="entry name" value="MutL, C-terminal domain, regulatory subdomain"/>
    <property type="match status" value="1"/>
</dbReference>
<dbReference type="HAMAP" id="MF_00149">
    <property type="entry name" value="DNA_mis_repair"/>
    <property type="match status" value="1"/>
</dbReference>
<dbReference type="InterPro" id="IPR014762">
    <property type="entry name" value="DNA_mismatch_repair_CS"/>
</dbReference>
<dbReference type="InterPro" id="IPR020667">
    <property type="entry name" value="DNA_mismatch_repair_MutL"/>
</dbReference>
<dbReference type="InterPro" id="IPR013507">
    <property type="entry name" value="DNA_mismatch_S5_2-like"/>
</dbReference>
<dbReference type="InterPro" id="IPR036890">
    <property type="entry name" value="HATPase_C_sf"/>
</dbReference>
<dbReference type="InterPro" id="IPR002099">
    <property type="entry name" value="MutL/Mlh/PMS"/>
</dbReference>
<dbReference type="InterPro" id="IPR038973">
    <property type="entry name" value="MutL/Mlh/Pms-like"/>
</dbReference>
<dbReference type="InterPro" id="IPR014790">
    <property type="entry name" value="MutL_C"/>
</dbReference>
<dbReference type="InterPro" id="IPR042120">
    <property type="entry name" value="MutL_C_dimsub"/>
</dbReference>
<dbReference type="InterPro" id="IPR042121">
    <property type="entry name" value="MutL_C_regsub"/>
</dbReference>
<dbReference type="InterPro" id="IPR037198">
    <property type="entry name" value="MutL_C_sf"/>
</dbReference>
<dbReference type="InterPro" id="IPR020568">
    <property type="entry name" value="Ribosomal_Su5_D2-typ_SF"/>
</dbReference>
<dbReference type="InterPro" id="IPR014721">
    <property type="entry name" value="Ribsml_uS5_D2-typ_fold_subgr"/>
</dbReference>
<dbReference type="NCBIfam" id="TIGR00585">
    <property type="entry name" value="mutl"/>
    <property type="match status" value="1"/>
</dbReference>
<dbReference type="NCBIfam" id="NF000953">
    <property type="entry name" value="PRK00095.2-4"/>
    <property type="match status" value="1"/>
</dbReference>
<dbReference type="PANTHER" id="PTHR10073">
    <property type="entry name" value="DNA MISMATCH REPAIR PROTEIN MLH, PMS, MUTL"/>
    <property type="match status" value="1"/>
</dbReference>
<dbReference type="PANTHER" id="PTHR10073:SF12">
    <property type="entry name" value="DNA MISMATCH REPAIR PROTEIN MLH1"/>
    <property type="match status" value="1"/>
</dbReference>
<dbReference type="Pfam" id="PF01119">
    <property type="entry name" value="DNA_mis_repair"/>
    <property type="match status" value="1"/>
</dbReference>
<dbReference type="Pfam" id="PF13589">
    <property type="entry name" value="HATPase_c_3"/>
    <property type="match status" value="1"/>
</dbReference>
<dbReference type="Pfam" id="PF08676">
    <property type="entry name" value="MutL_C"/>
    <property type="match status" value="1"/>
</dbReference>
<dbReference type="SMART" id="SM01340">
    <property type="entry name" value="DNA_mis_repair"/>
    <property type="match status" value="1"/>
</dbReference>
<dbReference type="SMART" id="SM00853">
    <property type="entry name" value="MutL_C"/>
    <property type="match status" value="1"/>
</dbReference>
<dbReference type="SUPFAM" id="SSF55874">
    <property type="entry name" value="ATPase domain of HSP90 chaperone/DNA topoisomerase II/histidine kinase"/>
    <property type="match status" value="1"/>
</dbReference>
<dbReference type="SUPFAM" id="SSF118116">
    <property type="entry name" value="DNA mismatch repair protein MutL"/>
    <property type="match status" value="1"/>
</dbReference>
<dbReference type="SUPFAM" id="SSF54211">
    <property type="entry name" value="Ribosomal protein S5 domain 2-like"/>
    <property type="match status" value="1"/>
</dbReference>
<dbReference type="PROSITE" id="PS00058">
    <property type="entry name" value="DNA_MISMATCH_REPAIR_1"/>
    <property type="match status" value="1"/>
</dbReference>
<comment type="function">
    <text evidence="1">This protein is involved in the repair of mismatches in DNA. It is required for dam-dependent methyl-directed DNA mismatch repair. May act as a 'molecular matchmaker', a protein that promotes the formation of a stable complex between two or more DNA-binding proteins in an ATP-dependent manner without itself being part of a final effector complex.</text>
</comment>
<comment type="similarity">
    <text evidence="1">Belongs to the DNA mismatch repair MutL/HexB family.</text>
</comment>
<feature type="chain" id="PRO_1000010066" description="DNA mismatch repair protein MutL">
    <location>
        <begin position="1"/>
        <end position="597"/>
    </location>
</feature>
<keyword id="KW-0227">DNA damage</keyword>
<keyword id="KW-0234">DNA repair</keyword>
<proteinExistence type="inferred from homology"/>
<name>MUTL_RHOPS</name>
<reference key="1">
    <citation type="submission" date="2006-03" db="EMBL/GenBank/DDBJ databases">
        <title>Complete sequence of Rhodopseudomonas palustris BisB5.</title>
        <authorList>
            <consortium name="US DOE Joint Genome Institute"/>
            <person name="Copeland A."/>
            <person name="Lucas S."/>
            <person name="Lapidus A."/>
            <person name="Barry K."/>
            <person name="Detter J.C."/>
            <person name="Glavina del Rio T."/>
            <person name="Hammon N."/>
            <person name="Israni S."/>
            <person name="Dalin E."/>
            <person name="Tice H."/>
            <person name="Pitluck S."/>
            <person name="Chain P."/>
            <person name="Malfatti S."/>
            <person name="Shin M."/>
            <person name="Vergez L."/>
            <person name="Schmutz J."/>
            <person name="Larimer F."/>
            <person name="Land M."/>
            <person name="Hauser L."/>
            <person name="Pelletier D.A."/>
            <person name="Kyrpides N."/>
            <person name="Lykidis A."/>
            <person name="Oda Y."/>
            <person name="Harwood C.S."/>
            <person name="Richardson P."/>
        </authorList>
    </citation>
    <scope>NUCLEOTIDE SEQUENCE [LARGE SCALE GENOMIC DNA]</scope>
    <source>
        <strain>BisB5</strain>
    </source>
</reference>
<evidence type="ECO:0000255" key="1">
    <source>
        <dbReference type="HAMAP-Rule" id="MF_00149"/>
    </source>
</evidence>
<accession>Q131I8</accession>